<comment type="induction">
    <text evidence="1">Expressed in the late phase of the viral replicative cycle.</text>
</comment>
<comment type="similarity">
    <text evidence="2">Belongs to the asfivirus H233R family.</text>
</comment>
<name>VF233_ASFB7</name>
<reference key="1">
    <citation type="journal article" date="1995" name="Virology">
        <title>Analysis of the complete nucleotide sequence of African swine fever virus.</title>
        <authorList>
            <person name="Yanez R.J."/>
            <person name="Rodriguez J.M."/>
            <person name="Nogal M.L."/>
            <person name="Yuste L."/>
            <person name="Enriquez C."/>
            <person name="Rodriguez J.F."/>
            <person name="Vinuela E."/>
        </authorList>
    </citation>
    <scope>NUCLEOTIDE SEQUENCE [LARGE SCALE GENOMIC DNA]</scope>
</reference>
<reference key="2">
    <citation type="journal article" date="2020" name="J. Virol.">
        <title>The African Swine Fever Virus Transcriptome.</title>
        <authorList>
            <person name="Cackett G."/>
            <person name="Matelska D."/>
            <person name="Sykora M."/>
            <person name="Portugal R."/>
            <person name="Malecki M."/>
            <person name="Baehler J."/>
            <person name="Dixon L."/>
            <person name="Werner F."/>
        </authorList>
    </citation>
    <scope>INDUCTION</scope>
</reference>
<dbReference type="EMBL" id="U18466">
    <property type="protein sequence ID" value="AAA65347.1"/>
    <property type="molecule type" value="Genomic_DNA"/>
</dbReference>
<dbReference type="RefSeq" id="NP_042811.1">
    <property type="nucleotide sequence ID" value="NC_001659.2"/>
</dbReference>
<dbReference type="GeneID" id="22220348"/>
<dbReference type="KEGG" id="vg:22220348"/>
<dbReference type="Proteomes" id="UP000000624">
    <property type="component" value="Segment"/>
</dbReference>
<gene>
    <name type="ordered locus">Ba71V-118</name>
    <name type="ORF">H233R</name>
</gene>
<feature type="chain" id="PRO_5000144428" description="Uncharacterized protein H233R">
    <location>
        <begin position="1"/>
        <end position="233"/>
    </location>
</feature>
<protein>
    <recommendedName>
        <fullName>Uncharacterized protein H233R</fullName>
        <shortName>pH233R</shortName>
    </recommendedName>
</protein>
<accession>Q65189</accession>
<proteinExistence type="evidence at transcript level"/>
<keyword id="KW-0426">Late protein</keyword>
<keyword id="KW-1185">Reference proteome</keyword>
<sequence>MILIASPFSLAHLEYLHTWHVTIKNIAQQHGLDIKVAIVVSTSHLNNFLPISGALNIECITFPSCGIKEIDLLWARIKLFQHYCAIGARLLWLVSADIRPPVSAWPAIADSLKKGADAVVIPYPSRWNNLIPTVIKEIVVHQKKCLVAVDARHLDTDTQIVGAGMGCIVLTLKALMVRLSIGKQPVKILWPDLHGTAEGIPLEGVEVGWFLNAYAHKLNIRCLGADHIAQHLT</sequence>
<evidence type="ECO:0000269" key="1">
    <source>
    </source>
</evidence>
<evidence type="ECO:0000305" key="2"/>
<organism>
    <name type="scientific">African swine fever virus (strain Badajoz 1971 Vero-adapted)</name>
    <name type="common">Ba71V</name>
    <name type="synonym">ASFV</name>
    <dbReference type="NCBI Taxonomy" id="10498"/>
    <lineage>
        <taxon>Viruses</taxon>
        <taxon>Varidnaviria</taxon>
        <taxon>Bamfordvirae</taxon>
        <taxon>Nucleocytoviricota</taxon>
        <taxon>Pokkesviricetes</taxon>
        <taxon>Asfuvirales</taxon>
        <taxon>Asfarviridae</taxon>
        <taxon>Asfivirus</taxon>
        <taxon>African swine fever virus</taxon>
    </lineage>
</organism>
<organismHost>
    <name type="scientific">Ornithodoros</name>
    <name type="common">relapsing fever ticks</name>
    <dbReference type="NCBI Taxonomy" id="6937"/>
</organismHost>
<organismHost>
    <name type="scientific">Sus scrofa</name>
    <name type="common">Pig</name>
    <dbReference type="NCBI Taxonomy" id="9823"/>
</organismHost>